<reference key="1">
    <citation type="journal article" date="2010" name="BMC Genomics">
        <title>A genomic perspective on the potential of Actinobacillus succinogenes for industrial succinate production.</title>
        <authorList>
            <person name="McKinlay J.B."/>
            <person name="Laivenieks M."/>
            <person name="Schindler B.D."/>
            <person name="McKinlay A.A."/>
            <person name="Siddaramappa S."/>
            <person name="Challacombe J.F."/>
            <person name="Lowry S.R."/>
            <person name="Clum A."/>
            <person name="Lapidus A.L."/>
            <person name="Burkhart K.B."/>
            <person name="Harkins V."/>
            <person name="Vieille C."/>
        </authorList>
    </citation>
    <scope>NUCLEOTIDE SEQUENCE [LARGE SCALE GENOMIC DNA]</scope>
    <source>
        <strain>ATCC 55618 / DSM 22257 / CCUG 43843 / 130Z</strain>
    </source>
</reference>
<protein>
    <recommendedName>
        <fullName evidence="1">Recombination-associated protein RdgC</fullName>
    </recommendedName>
</protein>
<comment type="function">
    <text evidence="1">May be involved in recombination.</text>
</comment>
<comment type="subcellular location">
    <subcellularLocation>
        <location evidence="1">Cytoplasm</location>
        <location evidence="1">Nucleoid</location>
    </subcellularLocation>
</comment>
<comment type="similarity">
    <text evidence="1">Belongs to the RdgC family.</text>
</comment>
<name>RDGC_ACTSZ</name>
<feature type="chain" id="PRO_1000071699" description="Recombination-associated protein RdgC">
    <location>
        <begin position="1"/>
        <end position="302"/>
    </location>
</feature>
<gene>
    <name evidence="1" type="primary">rdgC</name>
    <name type="ordered locus">Asuc_1860</name>
</gene>
<proteinExistence type="inferred from homology"/>
<dbReference type="EMBL" id="CP000746">
    <property type="protein sequence ID" value="ABR75211.1"/>
    <property type="molecule type" value="Genomic_DNA"/>
</dbReference>
<dbReference type="RefSeq" id="WP_012073588.1">
    <property type="nucleotide sequence ID" value="NC_009655.1"/>
</dbReference>
<dbReference type="SMR" id="A6VQG4"/>
<dbReference type="STRING" id="339671.Asuc_1860"/>
<dbReference type="KEGG" id="asu:Asuc_1860"/>
<dbReference type="eggNOG" id="COG2974">
    <property type="taxonomic scope" value="Bacteria"/>
</dbReference>
<dbReference type="HOGENOM" id="CLU_052038_1_1_6"/>
<dbReference type="OrthoDB" id="5290530at2"/>
<dbReference type="Proteomes" id="UP000001114">
    <property type="component" value="Chromosome"/>
</dbReference>
<dbReference type="GO" id="GO:0043590">
    <property type="term" value="C:bacterial nucleoid"/>
    <property type="evidence" value="ECO:0007669"/>
    <property type="project" value="TreeGrafter"/>
</dbReference>
<dbReference type="GO" id="GO:0005737">
    <property type="term" value="C:cytoplasm"/>
    <property type="evidence" value="ECO:0007669"/>
    <property type="project" value="UniProtKB-UniRule"/>
</dbReference>
<dbReference type="GO" id="GO:0003690">
    <property type="term" value="F:double-stranded DNA binding"/>
    <property type="evidence" value="ECO:0007669"/>
    <property type="project" value="TreeGrafter"/>
</dbReference>
<dbReference type="GO" id="GO:0006310">
    <property type="term" value="P:DNA recombination"/>
    <property type="evidence" value="ECO:0007669"/>
    <property type="project" value="UniProtKB-UniRule"/>
</dbReference>
<dbReference type="GO" id="GO:0000018">
    <property type="term" value="P:regulation of DNA recombination"/>
    <property type="evidence" value="ECO:0007669"/>
    <property type="project" value="TreeGrafter"/>
</dbReference>
<dbReference type="HAMAP" id="MF_00194">
    <property type="entry name" value="RdgC"/>
    <property type="match status" value="1"/>
</dbReference>
<dbReference type="InterPro" id="IPR007476">
    <property type="entry name" value="RdgC"/>
</dbReference>
<dbReference type="NCBIfam" id="NF001462">
    <property type="entry name" value="PRK00321.1-3"/>
    <property type="match status" value="1"/>
</dbReference>
<dbReference type="NCBIfam" id="NF001464">
    <property type="entry name" value="PRK00321.1-5"/>
    <property type="match status" value="1"/>
</dbReference>
<dbReference type="PANTHER" id="PTHR38103">
    <property type="entry name" value="RECOMBINATION-ASSOCIATED PROTEIN RDGC"/>
    <property type="match status" value="1"/>
</dbReference>
<dbReference type="PANTHER" id="PTHR38103:SF1">
    <property type="entry name" value="RECOMBINATION-ASSOCIATED PROTEIN RDGC"/>
    <property type="match status" value="1"/>
</dbReference>
<dbReference type="Pfam" id="PF04381">
    <property type="entry name" value="RdgC"/>
    <property type="match status" value="1"/>
</dbReference>
<organism>
    <name type="scientific">Actinobacillus succinogenes (strain ATCC 55618 / DSM 22257 / CCUG 43843 / 130Z)</name>
    <dbReference type="NCBI Taxonomy" id="339671"/>
    <lineage>
        <taxon>Bacteria</taxon>
        <taxon>Pseudomonadati</taxon>
        <taxon>Pseudomonadota</taxon>
        <taxon>Gammaproteobacteria</taxon>
        <taxon>Pasteurellales</taxon>
        <taxon>Pasteurellaceae</taxon>
        <taxon>Actinobacillus</taxon>
    </lineage>
</organism>
<evidence type="ECO:0000255" key="1">
    <source>
        <dbReference type="HAMAP-Rule" id="MF_00194"/>
    </source>
</evidence>
<sequence>MYWFKNAMIYRLTKKLDWSEEALQQNLTQNAYHPCGQSDMSRFGWSTPLRGAELLHFSVGKQILLVAHKEEKIIPSHVVKRELDNRIDELEQKENRKLKKTEKQALKDDVVSVLLPRAFSKNQQTAIWINTETNLIYIDAASSKRAEDVLALLRKSLGSLPVVPLAFANEPALMMTNWIARNEMPQYLTALEEAELKAADDKGIIRCKNQPLDSEEILSHLEKGKFITKLALDWETHLSFVLNDDGTLKRLKFADNIREKNDDILKEDYAQRFDADFILMTGELTALTENLLDDLGGEKTRL</sequence>
<accession>A6VQG4</accession>
<keyword id="KW-0963">Cytoplasm</keyword>
<keyword id="KW-0233">DNA recombination</keyword>
<keyword id="KW-1185">Reference proteome</keyword>